<reference key="1">
    <citation type="journal article" date="2006" name="Proc. Natl. Acad. Sci. U.S.A.">
        <title>Burkholderia xenovorans LB400 harbors a multi-replicon, 9.73-Mbp genome shaped for versatility.</title>
        <authorList>
            <person name="Chain P.S.G."/>
            <person name="Denef V.J."/>
            <person name="Konstantinidis K.T."/>
            <person name="Vergez L.M."/>
            <person name="Agullo L."/>
            <person name="Reyes V.L."/>
            <person name="Hauser L."/>
            <person name="Cordova M."/>
            <person name="Gomez L."/>
            <person name="Gonzalez M."/>
            <person name="Land M."/>
            <person name="Lao V."/>
            <person name="Larimer F."/>
            <person name="LiPuma J.J."/>
            <person name="Mahenthiralingam E."/>
            <person name="Malfatti S.A."/>
            <person name="Marx C.J."/>
            <person name="Parnell J.J."/>
            <person name="Ramette A."/>
            <person name="Richardson P."/>
            <person name="Seeger M."/>
            <person name="Smith D."/>
            <person name="Spilker T."/>
            <person name="Sul W.J."/>
            <person name="Tsoi T.V."/>
            <person name="Ulrich L.E."/>
            <person name="Zhulin I.B."/>
            <person name="Tiedje J.M."/>
        </authorList>
    </citation>
    <scope>NUCLEOTIDE SEQUENCE [LARGE SCALE GENOMIC DNA]</scope>
    <source>
        <strain>LB400</strain>
    </source>
</reference>
<protein>
    <recommendedName>
        <fullName evidence="1">Glucose-6-phosphate isomerase</fullName>
        <shortName evidence="1">GPI</shortName>
        <ecNumber evidence="1">5.3.1.9</ecNumber>
    </recommendedName>
    <alternativeName>
        <fullName evidence="1">Phosphoglucose isomerase</fullName>
        <shortName evidence="1">PGI</shortName>
    </alternativeName>
    <alternativeName>
        <fullName evidence="1">Phosphohexose isomerase</fullName>
        <shortName evidence="1">PHI</shortName>
    </alternativeName>
</protein>
<gene>
    <name evidence="1" type="primary">pgi</name>
    <name type="ordered locus">Bxeno_A2144</name>
    <name type="ORF">Bxe_A2287</name>
</gene>
<proteinExistence type="inferred from homology"/>
<accession>Q13Z07</accession>
<feature type="chain" id="PRO_0000252613" description="Glucose-6-phosphate isomerase">
    <location>
        <begin position="1"/>
        <end position="540"/>
    </location>
</feature>
<feature type="active site" description="Proton donor" evidence="1">
    <location>
        <position position="350"/>
    </location>
</feature>
<feature type="active site" evidence="1">
    <location>
        <position position="381"/>
    </location>
</feature>
<feature type="active site" evidence="1">
    <location>
        <position position="503"/>
    </location>
</feature>
<organism>
    <name type="scientific">Paraburkholderia xenovorans (strain LB400)</name>
    <dbReference type="NCBI Taxonomy" id="266265"/>
    <lineage>
        <taxon>Bacteria</taxon>
        <taxon>Pseudomonadati</taxon>
        <taxon>Pseudomonadota</taxon>
        <taxon>Betaproteobacteria</taxon>
        <taxon>Burkholderiales</taxon>
        <taxon>Burkholderiaceae</taxon>
        <taxon>Paraburkholderia</taxon>
    </lineage>
</organism>
<comment type="function">
    <text evidence="1">Catalyzes the reversible isomerization of glucose-6-phosphate to fructose-6-phosphate.</text>
</comment>
<comment type="catalytic activity">
    <reaction evidence="1">
        <text>alpha-D-glucose 6-phosphate = beta-D-fructose 6-phosphate</text>
        <dbReference type="Rhea" id="RHEA:11816"/>
        <dbReference type="ChEBI" id="CHEBI:57634"/>
        <dbReference type="ChEBI" id="CHEBI:58225"/>
        <dbReference type="EC" id="5.3.1.9"/>
    </reaction>
</comment>
<comment type="pathway">
    <text evidence="1">Carbohydrate biosynthesis; gluconeogenesis.</text>
</comment>
<comment type="pathway">
    <text evidence="1">Carbohydrate degradation; glycolysis; D-glyceraldehyde 3-phosphate and glycerone phosphate from D-glucose: step 2/4.</text>
</comment>
<comment type="subcellular location">
    <subcellularLocation>
        <location evidence="1">Cytoplasm</location>
    </subcellularLocation>
</comment>
<comment type="similarity">
    <text evidence="1">Belongs to the GPI family.</text>
</comment>
<sequence length="540" mass="59377">MTQNSLPSWSSLQTHYEKIRDAHMRDWFAPENDPAPTRAERFAFAGGGLAADFSKNRITDETLKLLVQLAREAGVEKRRDAMFAGAVVNPTEGRAALHTALRATDPKAPFYDQVQAERARMAAFADQVRSGEWKGYTGKRIRYVVNIGIGGSDLGPKMVVHALHHLATPEITTHFVSNVDGADLYNVMQQIDPEETLAIIVSKTFTTLETMTNARSLRDWFVEKGCPESALAKHFVGVSANPAEVVKFGIAKENVFEMWDWVGGRYSLWSAVGLSIMIAVGPQQFGELLAGANEMDQHFRDAPLEKNLPVLLGMIGIWYRNFFGSQSYLVAPYSEALHFLPSYLQQLEMESNGKSARLDGVMVDYPTAAVTWGEPGTNGQHAFFQMLHQGPTIVPIDFIAVLTPEHPLVSHHPKLLANCFAQSEALMLGRTLEEAKKVAGADKPELAPHLVFPGNRPTSTLLVDALTARSLGALIALYEHKVLVQASVWDINPFDQWGVELGKILGKVVEADLTAPSVDEKKHDSSTSALIARARAALKK</sequence>
<dbReference type="EC" id="5.3.1.9" evidence="1"/>
<dbReference type="EMBL" id="CP000270">
    <property type="protein sequence ID" value="ABE30682.1"/>
    <property type="molecule type" value="Genomic_DNA"/>
</dbReference>
<dbReference type="RefSeq" id="WP_011488306.1">
    <property type="nucleotide sequence ID" value="NC_007951.1"/>
</dbReference>
<dbReference type="SMR" id="Q13Z07"/>
<dbReference type="STRING" id="266265.Bxe_A2287"/>
<dbReference type="KEGG" id="bxb:DR64_4436"/>
<dbReference type="KEGG" id="bxe:Bxe_A2287"/>
<dbReference type="PATRIC" id="fig|266265.5.peg.2244"/>
<dbReference type="eggNOG" id="COG0166">
    <property type="taxonomic scope" value="Bacteria"/>
</dbReference>
<dbReference type="OrthoDB" id="140919at2"/>
<dbReference type="UniPathway" id="UPA00109">
    <property type="reaction ID" value="UER00181"/>
</dbReference>
<dbReference type="UniPathway" id="UPA00138"/>
<dbReference type="Proteomes" id="UP000001817">
    <property type="component" value="Chromosome 1"/>
</dbReference>
<dbReference type="GO" id="GO:0005829">
    <property type="term" value="C:cytosol"/>
    <property type="evidence" value="ECO:0007669"/>
    <property type="project" value="TreeGrafter"/>
</dbReference>
<dbReference type="GO" id="GO:0097367">
    <property type="term" value="F:carbohydrate derivative binding"/>
    <property type="evidence" value="ECO:0007669"/>
    <property type="project" value="InterPro"/>
</dbReference>
<dbReference type="GO" id="GO:0004347">
    <property type="term" value="F:glucose-6-phosphate isomerase activity"/>
    <property type="evidence" value="ECO:0007669"/>
    <property type="project" value="UniProtKB-UniRule"/>
</dbReference>
<dbReference type="GO" id="GO:0048029">
    <property type="term" value="F:monosaccharide binding"/>
    <property type="evidence" value="ECO:0007669"/>
    <property type="project" value="TreeGrafter"/>
</dbReference>
<dbReference type="GO" id="GO:0006094">
    <property type="term" value="P:gluconeogenesis"/>
    <property type="evidence" value="ECO:0007669"/>
    <property type="project" value="UniProtKB-UniRule"/>
</dbReference>
<dbReference type="GO" id="GO:0051156">
    <property type="term" value="P:glucose 6-phosphate metabolic process"/>
    <property type="evidence" value="ECO:0007669"/>
    <property type="project" value="TreeGrafter"/>
</dbReference>
<dbReference type="GO" id="GO:0006096">
    <property type="term" value="P:glycolytic process"/>
    <property type="evidence" value="ECO:0007669"/>
    <property type="project" value="UniProtKB-UniRule"/>
</dbReference>
<dbReference type="CDD" id="cd05015">
    <property type="entry name" value="SIS_PGI_1"/>
    <property type="match status" value="1"/>
</dbReference>
<dbReference type="CDD" id="cd05016">
    <property type="entry name" value="SIS_PGI_2"/>
    <property type="match status" value="1"/>
</dbReference>
<dbReference type="Gene3D" id="1.10.1390.10">
    <property type="match status" value="1"/>
</dbReference>
<dbReference type="Gene3D" id="3.40.50.10490">
    <property type="entry name" value="Glucose-6-phosphate isomerase like protein, domain 1"/>
    <property type="match status" value="2"/>
</dbReference>
<dbReference type="HAMAP" id="MF_00473">
    <property type="entry name" value="G6P_isomerase"/>
    <property type="match status" value="1"/>
</dbReference>
<dbReference type="InterPro" id="IPR001672">
    <property type="entry name" value="G6P_Isomerase"/>
</dbReference>
<dbReference type="InterPro" id="IPR023096">
    <property type="entry name" value="G6P_Isomerase_C"/>
</dbReference>
<dbReference type="InterPro" id="IPR018189">
    <property type="entry name" value="Phosphoglucose_isomerase_CS"/>
</dbReference>
<dbReference type="InterPro" id="IPR046348">
    <property type="entry name" value="SIS_dom_sf"/>
</dbReference>
<dbReference type="InterPro" id="IPR035476">
    <property type="entry name" value="SIS_PGI_1"/>
</dbReference>
<dbReference type="InterPro" id="IPR035482">
    <property type="entry name" value="SIS_PGI_2"/>
</dbReference>
<dbReference type="NCBIfam" id="NF001211">
    <property type="entry name" value="PRK00179.1"/>
    <property type="match status" value="1"/>
</dbReference>
<dbReference type="PANTHER" id="PTHR11469">
    <property type="entry name" value="GLUCOSE-6-PHOSPHATE ISOMERASE"/>
    <property type="match status" value="1"/>
</dbReference>
<dbReference type="PANTHER" id="PTHR11469:SF1">
    <property type="entry name" value="GLUCOSE-6-PHOSPHATE ISOMERASE"/>
    <property type="match status" value="1"/>
</dbReference>
<dbReference type="Pfam" id="PF00342">
    <property type="entry name" value="PGI"/>
    <property type="match status" value="1"/>
</dbReference>
<dbReference type="PRINTS" id="PR00662">
    <property type="entry name" value="G6PISOMERASE"/>
</dbReference>
<dbReference type="SUPFAM" id="SSF53697">
    <property type="entry name" value="SIS domain"/>
    <property type="match status" value="1"/>
</dbReference>
<dbReference type="PROSITE" id="PS00765">
    <property type="entry name" value="P_GLUCOSE_ISOMERASE_1"/>
    <property type="match status" value="1"/>
</dbReference>
<dbReference type="PROSITE" id="PS00174">
    <property type="entry name" value="P_GLUCOSE_ISOMERASE_2"/>
    <property type="match status" value="1"/>
</dbReference>
<dbReference type="PROSITE" id="PS51463">
    <property type="entry name" value="P_GLUCOSE_ISOMERASE_3"/>
    <property type="match status" value="1"/>
</dbReference>
<evidence type="ECO:0000255" key="1">
    <source>
        <dbReference type="HAMAP-Rule" id="MF_00473"/>
    </source>
</evidence>
<keyword id="KW-0963">Cytoplasm</keyword>
<keyword id="KW-0312">Gluconeogenesis</keyword>
<keyword id="KW-0324">Glycolysis</keyword>
<keyword id="KW-0413">Isomerase</keyword>
<keyword id="KW-1185">Reference proteome</keyword>
<name>G6PI_PARXL</name>